<sequence length="763" mass="85541">MHTGGETSACKPSSVRLAPSFSFHAAGLQMAAQMPHSHQYSDRRQPNISDQQVSALSYSDQIQQPLTNQVMPDIVMLQRRMPQTFRDPATAPLRKLSVDLIKTYKHINEVYYAKKKRRHQQGQGDDSSHKKERKVYNDGYDDDNYDYIVKNGEKWMDRYEIDSLIGKGSFGQVVKAYDRVEQEWVAIKIIKNKKAFLNQAQIEVRLLELMNKHDTEMKYYIVHLKRHFMFRNHLCLVFEMLSYNLYDLLRNTNFRGVSLNLTRKFAQQMCTALLFLATPELSIIHCDLKPENILLCNPKRSAIKIVDFGSSCQLGQRIYQYIQSRFYRSPEVLLGMPYDLAIDMWSLGCILVEMHTGEPLFSGANEVDQMNKIVEVLGIPPAHILDQAPKARKFFEKLPDGTWSLKKTKDGKREYKPPGTRKLHNILGVETGGPGGRRAGESGHTVADYLKFKDLILRMLDYDPKTRIQPYYALQHSFFKKTADEGTNTSNSVSTSPAMEQSQSSGTTSSTSSSSGGSSGTSNSGRARSDPTHQHRHSGGHFAAAVQAMDCETHSPQVRQQFPAPLGWSGTEAPTQVTVETHPVQETTFHVAPQQNALHHHHGNSSHHHHHHHHHHHHHGQQALGNRTRPRVYNSPTNSSSTQDSMEVGHSHHSMTSLSSSTTSSSTSSSSTGNQGNQAYQNRPVAANTLDFGQNGAMDVNLTVYSNPRQETGIAGHPTYQFSANTGPAHYMTEGHLTMRQGADREESPMTGVCVQQSPVASS</sequence>
<dbReference type="EC" id="2.7.11.23" evidence="1"/>
<dbReference type="EC" id="2.7.12.1" evidence="9"/>
<dbReference type="EMBL" id="X79769">
    <property type="protein sequence ID" value="CAA56164.1"/>
    <property type="molecule type" value="mRNA"/>
</dbReference>
<dbReference type="RefSeq" id="NP_036923.1">
    <molecule id="Q63470-1"/>
    <property type="nucleotide sequence ID" value="NM_012791.3"/>
</dbReference>
<dbReference type="RefSeq" id="XP_006248093.1">
    <property type="nucleotide sequence ID" value="XM_006248031.3"/>
</dbReference>
<dbReference type="RefSeq" id="XP_008766785.1">
    <property type="nucleotide sequence ID" value="XM_008768563.2"/>
</dbReference>
<dbReference type="RefSeq" id="XP_008766786.1">
    <property type="nucleotide sequence ID" value="XM_008768564.1"/>
</dbReference>
<dbReference type="RefSeq" id="XP_008766787.1">
    <property type="nucleotide sequence ID" value="XM_008768565.2"/>
</dbReference>
<dbReference type="RefSeq" id="XP_038943954.1">
    <molecule id="Q63470-1"/>
    <property type="nucleotide sequence ID" value="XM_039088026.2"/>
</dbReference>
<dbReference type="RefSeq" id="XP_038943955.1">
    <molecule id="Q63470-1"/>
    <property type="nucleotide sequence ID" value="XM_039088027.2"/>
</dbReference>
<dbReference type="RefSeq" id="XP_038943956.1">
    <molecule id="Q63470-1"/>
    <property type="nucleotide sequence ID" value="XM_039088028.2"/>
</dbReference>
<dbReference type="RefSeq" id="XP_038943959.1">
    <molecule id="Q63470-2"/>
    <property type="nucleotide sequence ID" value="XM_039088031.2"/>
</dbReference>
<dbReference type="RefSeq" id="XP_063126374.1">
    <molecule id="Q63470-1"/>
    <property type="nucleotide sequence ID" value="XM_063270304.1"/>
</dbReference>
<dbReference type="RefSeq" id="XP_063126375.1">
    <molecule id="Q63470-2"/>
    <property type="nucleotide sequence ID" value="XM_063270305.1"/>
</dbReference>
<dbReference type="SMR" id="Q63470"/>
<dbReference type="BioGRID" id="247295">
    <property type="interactions" value="6"/>
</dbReference>
<dbReference type="ELM" id="Q63470"/>
<dbReference type="FunCoup" id="Q63470">
    <property type="interactions" value="4340"/>
</dbReference>
<dbReference type="IntAct" id="Q63470">
    <property type="interactions" value="5"/>
</dbReference>
<dbReference type="MINT" id="Q63470"/>
<dbReference type="STRING" id="10116.ENSRNOP00000042446"/>
<dbReference type="BindingDB" id="Q63470"/>
<dbReference type="ChEMBL" id="CHEMBL5508"/>
<dbReference type="DrugCentral" id="Q63470"/>
<dbReference type="GuidetoPHARMACOLOGY" id="2009"/>
<dbReference type="iPTMnet" id="Q63470"/>
<dbReference type="PhosphoSitePlus" id="Q63470"/>
<dbReference type="PaxDb" id="10116-ENSRNOP00000042446"/>
<dbReference type="Ensembl" id="ENSRNOT00000050342.6">
    <molecule id="Q63470-1"/>
    <property type="protein sequence ID" value="ENSRNOP00000042446.5"/>
    <property type="gene ID" value="ENSRNOG00000001662.8"/>
</dbReference>
<dbReference type="Ensembl" id="ENSRNOT00000114109.1">
    <molecule id="Q63470-2"/>
    <property type="protein sequence ID" value="ENSRNOP00000096172.1"/>
    <property type="gene ID" value="ENSRNOG00000001662.8"/>
</dbReference>
<dbReference type="GeneID" id="25255"/>
<dbReference type="KEGG" id="rno:25255"/>
<dbReference type="UCSC" id="RGD:2528">
    <molecule id="Q63470-1"/>
    <property type="organism name" value="rat"/>
</dbReference>
<dbReference type="AGR" id="RGD:2528"/>
<dbReference type="CTD" id="1859"/>
<dbReference type="RGD" id="2528">
    <property type="gene designation" value="Dyrk1a"/>
</dbReference>
<dbReference type="eggNOG" id="KOG0667">
    <property type="taxonomic scope" value="Eukaryota"/>
</dbReference>
<dbReference type="GeneTree" id="ENSGT00940000157408"/>
<dbReference type="HOGENOM" id="CLU_000288_5_6_1"/>
<dbReference type="InParanoid" id="Q63470"/>
<dbReference type="PhylomeDB" id="Q63470"/>
<dbReference type="TreeFam" id="TF314624"/>
<dbReference type="BRENDA" id="2.7.12.1">
    <property type="organism ID" value="5301"/>
</dbReference>
<dbReference type="Reactome" id="R-RNO-1538133">
    <property type="pathway name" value="G0 and Early G1"/>
</dbReference>
<dbReference type="PRO" id="PR:Q63470"/>
<dbReference type="Proteomes" id="UP000002494">
    <property type="component" value="Chromosome 11"/>
</dbReference>
<dbReference type="Bgee" id="ENSRNOG00000001662">
    <property type="expression patterns" value="Expressed in skeletal muscle tissue and 19 other cell types or tissues"/>
</dbReference>
<dbReference type="GO" id="GO:0030424">
    <property type="term" value="C:axon"/>
    <property type="evidence" value="ECO:0000266"/>
    <property type="project" value="RGD"/>
</dbReference>
<dbReference type="GO" id="GO:0005737">
    <property type="term" value="C:cytoplasm"/>
    <property type="evidence" value="ECO:0000250"/>
    <property type="project" value="UniProtKB"/>
</dbReference>
<dbReference type="GO" id="GO:0005856">
    <property type="term" value="C:cytoskeleton"/>
    <property type="evidence" value="ECO:0000266"/>
    <property type="project" value="RGD"/>
</dbReference>
<dbReference type="GO" id="GO:0030425">
    <property type="term" value="C:dendrite"/>
    <property type="evidence" value="ECO:0000266"/>
    <property type="project" value="RGD"/>
</dbReference>
<dbReference type="GO" id="GO:0016607">
    <property type="term" value="C:nuclear speck"/>
    <property type="evidence" value="ECO:0000314"/>
    <property type="project" value="UniProtKB"/>
</dbReference>
<dbReference type="GO" id="GO:0005634">
    <property type="term" value="C:nucleus"/>
    <property type="evidence" value="ECO:0000314"/>
    <property type="project" value="UniProtKB"/>
</dbReference>
<dbReference type="GO" id="GO:1990904">
    <property type="term" value="C:ribonucleoprotein complex"/>
    <property type="evidence" value="ECO:0000266"/>
    <property type="project" value="RGD"/>
</dbReference>
<dbReference type="GO" id="GO:0005524">
    <property type="term" value="F:ATP binding"/>
    <property type="evidence" value="ECO:0007669"/>
    <property type="project" value="UniProtKB-KW"/>
</dbReference>
<dbReference type="GO" id="GO:0140857">
    <property type="term" value="F:histone H3T45 kinase activity"/>
    <property type="evidence" value="ECO:0000266"/>
    <property type="project" value="RGD"/>
</dbReference>
<dbReference type="GO" id="GO:0042802">
    <property type="term" value="F:identical protein binding"/>
    <property type="evidence" value="ECO:0000266"/>
    <property type="project" value="RGD"/>
</dbReference>
<dbReference type="GO" id="GO:0004715">
    <property type="term" value="F:non-membrane spanning protein tyrosine kinase activity"/>
    <property type="evidence" value="ECO:0000266"/>
    <property type="project" value="RGD"/>
</dbReference>
<dbReference type="GO" id="GO:0004672">
    <property type="term" value="F:protein kinase activity"/>
    <property type="evidence" value="ECO:0000314"/>
    <property type="project" value="RGD"/>
</dbReference>
<dbReference type="GO" id="GO:0106310">
    <property type="term" value="F:protein serine kinase activity"/>
    <property type="evidence" value="ECO:0000266"/>
    <property type="project" value="RGD"/>
</dbReference>
<dbReference type="GO" id="GO:0004674">
    <property type="term" value="F:protein serine/threonine kinase activity"/>
    <property type="evidence" value="ECO:0000314"/>
    <property type="project" value="UniProtKB"/>
</dbReference>
<dbReference type="GO" id="GO:0004712">
    <property type="term" value="F:protein serine/threonine/tyrosine kinase activity"/>
    <property type="evidence" value="ECO:0007669"/>
    <property type="project" value="UniProtKB-EC"/>
</dbReference>
<dbReference type="GO" id="GO:0004713">
    <property type="term" value="F:protein tyrosine kinase activity"/>
    <property type="evidence" value="ECO:0000314"/>
    <property type="project" value="UniProtKB"/>
</dbReference>
<dbReference type="GO" id="GO:0008353">
    <property type="term" value="F:RNA polymerase II CTD heptapeptide repeat kinase activity"/>
    <property type="evidence" value="ECO:0000250"/>
    <property type="project" value="UniProtKB"/>
</dbReference>
<dbReference type="GO" id="GO:1990935">
    <property type="term" value="F:splicing factor binding"/>
    <property type="evidence" value="ECO:0000353"/>
    <property type="project" value="ARUK-UCL"/>
</dbReference>
<dbReference type="GO" id="GO:0048156">
    <property type="term" value="F:tau protein binding"/>
    <property type="evidence" value="ECO:0000266"/>
    <property type="project" value="RGD"/>
</dbReference>
<dbReference type="GO" id="GO:0003713">
    <property type="term" value="F:transcription coactivator activity"/>
    <property type="evidence" value="ECO:0000318"/>
    <property type="project" value="GO_Central"/>
</dbReference>
<dbReference type="GO" id="GO:0034205">
    <property type="term" value="P:amyloid-beta formation"/>
    <property type="evidence" value="ECO:0000266"/>
    <property type="project" value="RGD"/>
</dbReference>
<dbReference type="GO" id="GO:0033173">
    <property type="term" value="P:calcineurin-NFAT signaling cascade"/>
    <property type="evidence" value="ECO:0000315"/>
    <property type="project" value="RGD"/>
</dbReference>
<dbReference type="GO" id="GO:0003300">
    <property type="term" value="P:cardiac muscle hypertrophy"/>
    <property type="evidence" value="ECO:0000270"/>
    <property type="project" value="RGD"/>
</dbReference>
<dbReference type="GO" id="GO:0007623">
    <property type="term" value="P:circadian rhythm"/>
    <property type="evidence" value="ECO:0000250"/>
    <property type="project" value="UniProtKB"/>
</dbReference>
<dbReference type="GO" id="GO:0045786">
    <property type="term" value="P:negative regulation of cell cycle"/>
    <property type="evidence" value="ECO:0000315"/>
    <property type="project" value="RGD"/>
</dbReference>
<dbReference type="GO" id="GO:0043518">
    <property type="term" value="P:negative regulation of DNA damage response, signal transduction by p53 class mediator"/>
    <property type="evidence" value="ECO:0000266"/>
    <property type="project" value="RGD"/>
</dbReference>
<dbReference type="GO" id="GO:0031452">
    <property type="term" value="P:negative regulation of heterochromatin formation"/>
    <property type="evidence" value="ECO:0000266"/>
    <property type="project" value="RGD"/>
</dbReference>
<dbReference type="GO" id="GO:0031115">
    <property type="term" value="P:negative regulation of microtubule polymerization"/>
    <property type="evidence" value="ECO:0000266"/>
    <property type="project" value="RGD"/>
</dbReference>
<dbReference type="GO" id="GO:0048025">
    <property type="term" value="P:negative regulation of mRNA splicing, via spliceosome"/>
    <property type="evidence" value="ECO:0000266"/>
    <property type="project" value="RGD"/>
</dbReference>
<dbReference type="GO" id="GO:0018105">
    <property type="term" value="P:peptidyl-serine phosphorylation"/>
    <property type="evidence" value="ECO:0000314"/>
    <property type="project" value="UniProtKB"/>
</dbReference>
<dbReference type="GO" id="GO:0018108">
    <property type="term" value="P:peptidyl-tyrosine phosphorylation"/>
    <property type="evidence" value="ECO:0000314"/>
    <property type="project" value="UniProtKB"/>
</dbReference>
<dbReference type="GO" id="GO:0045893">
    <property type="term" value="P:positive regulation of DNA-templated transcription"/>
    <property type="evidence" value="ECO:0000318"/>
    <property type="project" value="GO_Central"/>
</dbReference>
<dbReference type="GO" id="GO:0033120">
    <property type="term" value="P:positive regulation of RNA splicing"/>
    <property type="evidence" value="ECO:0000315"/>
    <property type="project" value="ARUK-UCL"/>
</dbReference>
<dbReference type="GO" id="GO:0046777">
    <property type="term" value="P:protein autophosphorylation"/>
    <property type="evidence" value="ECO:0000314"/>
    <property type="project" value="UniProtKB"/>
</dbReference>
<dbReference type="GO" id="GO:0006606">
    <property type="term" value="P:protein import into nucleus"/>
    <property type="evidence" value="ECO:0000314"/>
    <property type="project" value="RGD"/>
</dbReference>
<dbReference type="GO" id="GO:0006468">
    <property type="term" value="P:protein phosphorylation"/>
    <property type="evidence" value="ECO:0000314"/>
    <property type="project" value="UniProtKB"/>
</dbReference>
<dbReference type="GO" id="GO:0000381">
    <property type="term" value="P:regulation of alternative mRNA splicing, via spliceosome"/>
    <property type="evidence" value="ECO:0000314"/>
    <property type="project" value="UniProtKB"/>
</dbReference>
<dbReference type="GO" id="GO:0060043">
    <property type="term" value="P:regulation of cardiac muscle cell proliferation"/>
    <property type="evidence" value="ECO:0000315"/>
    <property type="project" value="RGD"/>
</dbReference>
<dbReference type="GO" id="GO:0061050">
    <property type="term" value="P:regulation of cell growth involved in cardiac muscle cell development"/>
    <property type="evidence" value="ECO:0000315"/>
    <property type="project" value="RGD"/>
</dbReference>
<dbReference type="CDD" id="cd14226">
    <property type="entry name" value="PKc_DYRK1"/>
    <property type="match status" value="1"/>
</dbReference>
<dbReference type="FunFam" id="3.30.200.20:FF:000087">
    <property type="entry name" value="Dual specificity tyrosine-phosphorylation-regulated kinase 1A"/>
    <property type="match status" value="1"/>
</dbReference>
<dbReference type="FunFam" id="1.10.510.10:FF:000264">
    <property type="entry name" value="dual specificity tyrosine-phosphorylation-regulated kinase 1B isoform X3"/>
    <property type="match status" value="1"/>
</dbReference>
<dbReference type="Gene3D" id="3.30.200.20">
    <property type="entry name" value="Phosphorylase Kinase, domain 1"/>
    <property type="match status" value="1"/>
</dbReference>
<dbReference type="Gene3D" id="1.10.510.10">
    <property type="entry name" value="Transferase(Phosphotransferase) domain 1"/>
    <property type="match status" value="1"/>
</dbReference>
<dbReference type="InterPro" id="IPR011009">
    <property type="entry name" value="Kinase-like_dom_sf"/>
</dbReference>
<dbReference type="InterPro" id="IPR044131">
    <property type="entry name" value="PKc_DYR1A/1B"/>
</dbReference>
<dbReference type="InterPro" id="IPR000719">
    <property type="entry name" value="Prot_kinase_dom"/>
</dbReference>
<dbReference type="InterPro" id="IPR017441">
    <property type="entry name" value="Protein_kinase_ATP_BS"/>
</dbReference>
<dbReference type="InterPro" id="IPR008271">
    <property type="entry name" value="Ser/Thr_kinase_AS"/>
</dbReference>
<dbReference type="InterPro" id="IPR050494">
    <property type="entry name" value="Ser_Thr_dual-spec_kinase"/>
</dbReference>
<dbReference type="PANTHER" id="PTHR24058">
    <property type="entry name" value="DUAL SPECIFICITY PROTEIN KINASE"/>
    <property type="match status" value="1"/>
</dbReference>
<dbReference type="PANTHER" id="PTHR24058:SF121">
    <property type="entry name" value="DUAL SPECIFICITY TYROSINE-PHOSPHORYLATION-REGULATED KINASE 1A"/>
    <property type="match status" value="1"/>
</dbReference>
<dbReference type="Pfam" id="PF00069">
    <property type="entry name" value="Pkinase"/>
    <property type="match status" value="1"/>
</dbReference>
<dbReference type="SMART" id="SM00220">
    <property type="entry name" value="S_TKc"/>
    <property type="match status" value="1"/>
</dbReference>
<dbReference type="SUPFAM" id="SSF56112">
    <property type="entry name" value="Protein kinase-like (PK-like)"/>
    <property type="match status" value="1"/>
</dbReference>
<dbReference type="PROSITE" id="PS00107">
    <property type="entry name" value="PROTEIN_KINASE_ATP"/>
    <property type="match status" value="1"/>
</dbReference>
<dbReference type="PROSITE" id="PS50011">
    <property type="entry name" value="PROTEIN_KINASE_DOM"/>
    <property type="match status" value="1"/>
</dbReference>
<dbReference type="PROSITE" id="PS00108">
    <property type="entry name" value="PROTEIN_KINASE_ST"/>
    <property type="match status" value="1"/>
</dbReference>
<proteinExistence type="evidence at protein level"/>
<keyword id="KW-0025">Alternative splicing</keyword>
<keyword id="KW-0067">ATP-binding</keyword>
<keyword id="KW-0418">Kinase</keyword>
<keyword id="KW-0547">Nucleotide-binding</keyword>
<keyword id="KW-0539">Nucleus</keyword>
<keyword id="KW-0597">Phosphoprotein</keyword>
<keyword id="KW-1185">Reference proteome</keyword>
<keyword id="KW-0723">Serine/threonine-protein kinase</keyword>
<keyword id="KW-0804">Transcription</keyword>
<keyword id="KW-0805">Transcription regulation</keyword>
<keyword id="KW-0808">Transferase</keyword>
<keyword id="KW-0829">Tyrosine-protein kinase</keyword>
<reference key="1">
    <citation type="journal article" date="1996" name="J. Biol. Chem.">
        <title>Dyrk, a dual specificity protein kinase with unique structural features whose activity is dependent on tyrosine residues between subdomains VII and VIII.</title>
        <authorList>
            <person name="Kentrup H."/>
            <person name="Becker W."/>
            <person name="Heukelbach J."/>
            <person name="Wilmes A."/>
            <person name="Schuermann A."/>
            <person name="Huppertz C."/>
            <person name="Kainulainen H."/>
            <person name="Joost H.-G."/>
        </authorList>
    </citation>
    <scope>NUCLEOTIDE SEQUENCE [MRNA] (ISOFORM LONG)</scope>
    <scope>FUNCTION</scope>
    <scope>TISSUE SPECIFICITY</scope>
    <scope>PHOSPHORYLATION AT TYR-219; TYR-319 AND TYR-321</scope>
    <scope>MUTAGENESIS OF LYS-188; TYR-219; TYR-319 AND TYR-321</scope>
    <source>
        <strain>Sprague-Dawley</strain>
        <tissue>Brain</tissue>
    </source>
</reference>
<reference key="2">
    <citation type="submission" date="1997-10" db="EMBL/GenBank/DDBJ databases">
        <authorList>
            <person name="Kentrup H."/>
        </authorList>
    </citation>
    <scope>SEQUENCE REVISION</scope>
</reference>
<reference key="3">
    <citation type="journal article" date="1998" name="J. Biol. Chem.">
        <title>Sequence characteristics, subcellular localization, and substrate specificity of DYRK-related kinases, a novel family of dual specificity protein kinases.</title>
        <authorList>
            <person name="Becker W."/>
            <person name="Weber Y."/>
            <person name="Wetzel K."/>
            <person name="Eirmbter K."/>
            <person name="Tejedor F.J."/>
            <person name="Joost H.-G."/>
        </authorList>
    </citation>
    <scope>FUNCTION</scope>
    <scope>TISSUE SPECIFICITY</scope>
    <scope>SUBCELLULAR LOCATION</scope>
</reference>
<reference key="4">
    <citation type="journal article" date="2008" name="Neuroscience">
        <title>The Down syndrome candidate dual-specificity tyrosine phosphorylation-regulated kinase 1A phosphorylates the neurodegeneration-related septin 4.</title>
        <authorList>
            <person name="Sitz J.H."/>
            <person name="Baumgaertel K."/>
            <person name="Haemmerle B."/>
            <person name="Papadopoulos C."/>
            <person name="Hekerman P."/>
            <person name="Tejedor F.J."/>
            <person name="Becker W."/>
            <person name="Lutz B."/>
        </authorList>
    </citation>
    <scope>FUNCTION</scope>
</reference>
<reference key="5">
    <citation type="journal article" date="2012" name="J. Biol. Chem.">
        <title>Dual-specificity tyrosine phosphorylation-regulated kinase 1A (Dyrk1A) modulates serine/arginine-rich protein 55 (SRp55)-promoted Tau exon 10 inclusion.</title>
        <authorList>
            <person name="Yin X."/>
            <person name="Jin N."/>
            <person name="Gu J."/>
            <person name="Shi J."/>
            <person name="Zhou J."/>
            <person name="Gong C.X."/>
            <person name="Iqbal K."/>
            <person name="Grundke-Iqbal I."/>
            <person name="Liu F."/>
        </authorList>
    </citation>
    <scope>SUBCELLULAR LOCATION</scope>
    <scope>FUNCTION</scope>
    <scope>MUTAGENESIS OF LYS-188</scope>
    <scope>TISSUE SPECIFICITY</scope>
</reference>
<reference key="6">
    <citation type="journal article" date="2012" name="J. Med. Chem.">
        <title>Selectivity, cocrystal structures, and neuroprotective properties of leucettines, a family of protein kinase inhibitors derived from the marine sponge alkaloid leucettamine B.</title>
        <authorList>
            <person name="Tahtouh T."/>
            <person name="Elkins J.M."/>
            <person name="Filippakopoulos P."/>
            <person name="Soundararajan M."/>
            <person name="Burgy G."/>
            <person name="Durieu E."/>
            <person name="Cochet C."/>
            <person name="Schmid R.S."/>
            <person name="Lo D.C."/>
            <person name="Delhommel F."/>
            <person name="Oberholzer A.E."/>
            <person name="Pearl L.H."/>
            <person name="Carreaux F."/>
            <person name="Bazureau J.P."/>
            <person name="Knapp S."/>
            <person name="Meijer L."/>
        </authorList>
    </citation>
    <scope>FUNCTION</scope>
    <scope>CATALYTIC ACTIVITY</scope>
    <scope>ACTIVITY REGULATION</scope>
    <scope>TISSUE SPECIFICITY</scope>
</reference>
<feature type="chain" id="PRO_0000085933" description="Dual specificity tyrosine-phosphorylation-regulated kinase 1A">
    <location>
        <begin position="1"/>
        <end position="763"/>
    </location>
</feature>
<feature type="domain" description="Protein kinase" evidence="4">
    <location>
        <begin position="159"/>
        <end position="479"/>
    </location>
</feature>
<feature type="region of interest" description="Disordered" evidence="6">
    <location>
        <begin position="33"/>
        <end position="56"/>
    </location>
</feature>
<feature type="region of interest" description="Disordered" evidence="6">
    <location>
        <begin position="115"/>
        <end position="136"/>
    </location>
</feature>
<feature type="region of interest" description="Disordered" evidence="6">
    <location>
        <begin position="408"/>
        <end position="442"/>
    </location>
</feature>
<feature type="region of interest" description="Disordered" evidence="6">
    <location>
        <begin position="485"/>
        <end position="540"/>
    </location>
</feature>
<feature type="region of interest" description="Histidine-rich domain (HRD)" evidence="1">
    <location>
        <begin position="595"/>
        <end position="625"/>
    </location>
</feature>
<feature type="region of interest" description="Disordered" evidence="6">
    <location>
        <begin position="596"/>
        <end position="679"/>
    </location>
</feature>
<feature type="region of interest" description="Disordered" evidence="6">
    <location>
        <begin position="744"/>
        <end position="763"/>
    </location>
</feature>
<feature type="short sequence motif" description="Bipartite nuclear localization signal" evidence="3">
    <location>
        <begin position="117"/>
        <end position="134"/>
    </location>
</feature>
<feature type="compositionally biased region" description="Polar residues" evidence="6">
    <location>
        <begin position="46"/>
        <end position="56"/>
    </location>
</feature>
<feature type="compositionally biased region" description="Polar residues" evidence="6">
    <location>
        <begin position="485"/>
        <end position="501"/>
    </location>
</feature>
<feature type="compositionally biased region" description="Low complexity" evidence="6">
    <location>
        <begin position="502"/>
        <end position="525"/>
    </location>
</feature>
<feature type="compositionally biased region" description="Basic residues" evidence="6">
    <location>
        <begin position="598"/>
        <end position="620"/>
    </location>
</feature>
<feature type="compositionally biased region" description="Polar residues" evidence="6">
    <location>
        <begin position="634"/>
        <end position="645"/>
    </location>
</feature>
<feature type="compositionally biased region" description="Low complexity" evidence="6">
    <location>
        <begin position="654"/>
        <end position="672"/>
    </location>
</feature>
<feature type="compositionally biased region" description="Polar residues" evidence="6">
    <location>
        <begin position="754"/>
        <end position="763"/>
    </location>
</feature>
<feature type="active site" description="Proton acceptor" evidence="4 5">
    <location>
        <position position="287"/>
    </location>
</feature>
<feature type="binding site" evidence="4">
    <location>
        <begin position="165"/>
        <end position="173"/>
    </location>
    <ligand>
        <name>ATP</name>
        <dbReference type="ChEBI" id="CHEBI:30616"/>
    </ligand>
</feature>
<feature type="binding site" evidence="12">
    <location>
        <position position="188"/>
    </location>
    <ligand>
        <name>ATP</name>
        <dbReference type="ChEBI" id="CHEBI:30616"/>
    </ligand>
</feature>
<feature type="binding site" evidence="4">
    <location>
        <begin position="238"/>
        <end position="241"/>
    </location>
    <ligand>
        <name>ATP</name>
        <dbReference type="ChEBI" id="CHEBI:30616"/>
    </ligand>
</feature>
<feature type="modified residue" description="Phosphoserine" evidence="1">
    <location>
        <position position="14"/>
    </location>
</feature>
<feature type="modified residue" description="Phosphotyrosine; by autocatalysis" evidence="1">
    <location>
        <position position="111"/>
    </location>
</feature>
<feature type="modified residue" description="Phosphotyrosine; by autocatalysis" evidence="1">
    <location>
        <position position="140"/>
    </location>
</feature>
<feature type="modified residue" description="Phosphotyrosine" evidence="1">
    <location>
        <position position="145"/>
    </location>
</feature>
<feature type="modified residue" description="Phosphotyrosine; by autocatalysis" evidence="1">
    <location>
        <position position="159"/>
    </location>
</feature>
<feature type="modified residue" description="Phosphotyrosine; by autocatalysis" evidence="1">
    <location>
        <position position="177"/>
    </location>
</feature>
<feature type="modified residue" description="Phosphotyrosine; by autocatalysis" evidence="10">
    <location>
        <position position="219"/>
    </location>
</feature>
<feature type="modified residue" description="Phosphoserine; by autocatalysis" evidence="1">
    <location>
        <position position="310"/>
    </location>
</feature>
<feature type="modified residue" description="Phosphotyrosine; by autocatalysis" evidence="10">
    <location>
        <position position="319"/>
    </location>
</feature>
<feature type="modified residue" description="Phosphotyrosine; by autocatalysis" evidence="10">
    <location>
        <position position="321"/>
    </location>
</feature>
<feature type="modified residue" description="Phosphothreonine; by autocatalysis" evidence="1">
    <location>
        <position position="402"/>
    </location>
</feature>
<feature type="modified residue" description="Phosphotyrosine; by autocatalysis" evidence="1">
    <location>
        <position position="449"/>
    </location>
</feature>
<feature type="modified residue" description="Phosphoserine" evidence="1">
    <location>
        <position position="529"/>
    </location>
</feature>
<feature type="modified residue" description="Phosphoserine" evidence="2">
    <location>
        <position position="538"/>
    </location>
</feature>
<feature type="modified residue" description="Phosphoserine" evidence="1">
    <location>
        <position position="748"/>
    </location>
</feature>
<feature type="modified residue" description="Phosphoserine" evidence="1">
    <location>
        <position position="758"/>
    </location>
</feature>
<feature type="splice variant" id="VSP_004924" description="In isoform Short." evidence="12">
    <location>
        <begin position="70"/>
        <end position="78"/>
    </location>
</feature>
<feature type="mutagenesis site" description="Abolishes autophosphorylation. Retains marginal kinase activity towards histones." evidence="8 10">
    <original>K</original>
    <variation>R</variation>
    <location>
        <position position="188"/>
    </location>
</feature>
<feature type="mutagenesis site" description="Reduced autophosphorylation on tyrosine, but retains some kinase activity towards histones." evidence="10">
    <original>Y</original>
    <variation>F</variation>
    <location>
        <position position="219"/>
    </location>
</feature>
<feature type="mutagenesis site" description="Suppressed autophosphorylation on tyrosine and reduced tyrosine, threonine and serine kinase activity towards histones; when associated with F-321." evidence="10">
    <original>Y</original>
    <variation>F</variation>
    <location>
        <position position="319"/>
    </location>
</feature>
<feature type="mutagenesis site" description="Suppressed autophosphorylation on tyrosine and reduced tyrosine, threonine and serine kinase activity towards histones; when associated with F-319." evidence="10">
    <original>Y</original>
    <variation>F</variation>
    <location>
        <position position="321"/>
    </location>
</feature>
<accession>Q63470</accession>
<protein>
    <recommendedName>
        <fullName>Dual specificity tyrosine-phosphorylation-regulated kinase 1A</fullName>
        <ecNumber evidence="1">2.7.11.23</ecNumber>
        <ecNumber evidence="9">2.7.12.1</ecNumber>
    </recommendedName>
    <alternativeName>
        <fullName>Dual specificity YAK1-related kinase</fullName>
    </alternativeName>
    <alternativeName>
        <fullName>Protein kinase minibrain homolog</fullName>
        <shortName>MNBH</shortName>
    </alternativeName>
    <alternativeName>
        <fullName>RP86</fullName>
    </alternativeName>
</protein>
<comment type="function">
    <text evidence="1 2 7 8 9 10 11">Dual-specificity kinase which possesses both serine/threonine and tyrosine kinase activities (PubMed:18938227, PubMed:22998443, PubMed:8631952, PubMed:9748265). Exhibits a substrate preference for proline at position P+1 and arginine at position P-3 (By similarity). Plays an important role in double-strand breaks (DSBs) repair following DNA damage (By similarity). Mechanistically, phosphorylates RNF169 and increases its ability to block accumulation of TP53BP1 at the DSB sites thereby promoting homologous recombination repair (HRR) (By similarity). Also acts as a positive regulator of transcription by acting as a CTD kinase that mediates phosphorylation of the CTD (C-terminal domain) of the large subunit of RNA polymerase II (RNAP II) POLR2A (By similarity). May play a role in a signaling pathway regulating nuclear functions of cell proliferation (By similarity). Modulates alternative splicing by phosphorylating the splice factor SRSF6 (PubMed:22767602). Has pro-survival function and negatively regulates the apoptotic process. Promotes cell survival upon genotoxic stress through phosphorylation of SIRT1. This in turn inhibits p53/TP53 activity and apoptosis (By similarity). Phosphorylates SEPTIN4, SEPTIN5 and SF3B1 at 'Thr-434' (PubMed:18938227).</text>
</comment>
<comment type="catalytic activity">
    <reaction evidence="9">
        <text>L-seryl-[protein] + ATP = O-phospho-L-seryl-[protein] + ADP + H(+)</text>
        <dbReference type="Rhea" id="RHEA:17989"/>
        <dbReference type="Rhea" id="RHEA-COMP:9863"/>
        <dbReference type="Rhea" id="RHEA-COMP:11604"/>
        <dbReference type="ChEBI" id="CHEBI:15378"/>
        <dbReference type="ChEBI" id="CHEBI:29999"/>
        <dbReference type="ChEBI" id="CHEBI:30616"/>
        <dbReference type="ChEBI" id="CHEBI:83421"/>
        <dbReference type="ChEBI" id="CHEBI:456216"/>
        <dbReference type="EC" id="2.7.12.1"/>
    </reaction>
</comment>
<comment type="catalytic activity">
    <reaction evidence="9">
        <text>L-threonyl-[protein] + ATP = O-phospho-L-threonyl-[protein] + ADP + H(+)</text>
        <dbReference type="Rhea" id="RHEA:46608"/>
        <dbReference type="Rhea" id="RHEA-COMP:11060"/>
        <dbReference type="Rhea" id="RHEA-COMP:11605"/>
        <dbReference type="ChEBI" id="CHEBI:15378"/>
        <dbReference type="ChEBI" id="CHEBI:30013"/>
        <dbReference type="ChEBI" id="CHEBI:30616"/>
        <dbReference type="ChEBI" id="CHEBI:61977"/>
        <dbReference type="ChEBI" id="CHEBI:456216"/>
        <dbReference type="EC" id="2.7.12.1"/>
    </reaction>
</comment>
<comment type="catalytic activity">
    <reaction evidence="9">
        <text>L-tyrosyl-[protein] + ATP = O-phospho-L-tyrosyl-[protein] + ADP + H(+)</text>
        <dbReference type="Rhea" id="RHEA:10596"/>
        <dbReference type="Rhea" id="RHEA-COMP:10136"/>
        <dbReference type="Rhea" id="RHEA-COMP:20101"/>
        <dbReference type="ChEBI" id="CHEBI:15378"/>
        <dbReference type="ChEBI" id="CHEBI:30616"/>
        <dbReference type="ChEBI" id="CHEBI:46858"/>
        <dbReference type="ChEBI" id="CHEBI:61978"/>
        <dbReference type="ChEBI" id="CHEBI:456216"/>
        <dbReference type="EC" id="2.7.12.1"/>
    </reaction>
</comment>
<comment type="catalytic activity">
    <reaction evidence="1">
        <text>[DNA-directed RNA polymerase] + ATP = phospho-[DNA-directed RNA polymerase] + ADP + H(+)</text>
        <dbReference type="Rhea" id="RHEA:10216"/>
        <dbReference type="Rhea" id="RHEA-COMP:11321"/>
        <dbReference type="Rhea" id="RHEA-COMP:11322"/>
        <dbReference type="ChEBI" id="CHEBI:15378"/>
        <dbReference type="ChEBI" id="CHEBI:30616"/>
        <dbReference type="ChEBI" id="CHEBI:43176"/>
        <dbReference type="ChEBI" id="CHEBI:68546"/>
        <dbReference type="ChEBI" id="CHEBI:456216"/>
        <dbReference type="EC" id="2.7.11.23"/>
    </reaction>
    <physiologicalReaction direction="left-to-right" evidence="1">
        <dbReference type="Rhea" id="RHEA:10217"/>
    </physiologicalReaction>
</comment>
<comment type="activity regulation">
    <text evidence="1 9">Inhibited by RANBP9 (By similarity). Inhibited by harmine, leucettamine B and leucettine L41 (PubMed:22998443).</text>
</comment>
<comment type="subunit">
    <text evidence="1 2">Interacts with RAD54L2/ARIP4 (By similarity). Interacts with CRY2 (By similarity). Interacts with RANBP9. Interacts with WDR68 (By similarity). Interacts with SIRT1 (By similarity).</text>
</comment>
<comment type="subcellular location">
    <subcellularLocation>
        <location evidence="8 11">Nucleus speckle</location>
    </subcellularLocation>
</comment>
<comment type="alternative products">
    <event type="alternative splicing"/>
    <isoform>
        <id>Q63470-1</id>
        <name>Long</name>
        <sequence type="displayed"/>
    </isoform>
    <isoform>
        <id>Q63470-2</id>
        <name>Short</name>
        <sequence type="described" ref="VSP_004924"/>
    </isoform>
</comment>
<comment type="tissue specificity">
    <text evidence="8 9 10 11">Detected in brain (at protein level). Ubiquitous.</text>
</comment>
<comment type="domain">
    <text evidence="1">The polyhistidine repeats act as targeting signals to nuclear speckles.</text>
</comment>
<comment type="domain">
    <text evidence="1">The histidine-rich domain (HRD) region is intrinsically disordered and promotes the formation of phase-separated liquid droplets that enhance its ability to phosphorylate the CTD (C-terminal domain) of the large subunit of RNA polymerase II (RNA Pol II).</text>
</comment>
<comment type="PTM">
    <text evidence="1 10">Can also autophosphorylate on serine and threonine residues (in vitro) (By similarity). Autophosphorylated on numerous tyrosine residues (PubMed:8631952).</text>
</comment>
<comment type="similarity">
    <text evidence="12">Belongs to the protein kinase superfamily. CMGC Ser/Thr protein kinase family. MNB/DYRK subfamily.</text>
</comment>
<gene>
    <name type="primary">Dyrk1a</name>
    <name type="synonym">Dyrk</name>
</gene>
<evidence type="ECO:0000250" key="1">
    <source>
        <dbReference type="UniProtKB" id="Q13627"/>
    </source>
</evidence>
<evidence type="ECO:0000250" key="2">
    <source>
        <dbReference type="UniProtKB" id="Q61214"/>
    </source>
</evidence>
<evidence type="ECO:0000255" key="3"/>
<evidence type="ECO:0000255" key="4">
    <source>
        <dbReference type="PROSITE-ProRule" id="PRU00159"/>
    </source>
</evidence>
<evidence type="ECO:0000255" key="5">
    <source>
        <dbReference type="PROSITE-ProRule" id="PRU10027"/>
    </source>
</evidence>
<evidence type="ECO:0000256" key="6">
    <source>
        <dbReference type="SAM" id="MobiDB-lite"/>
    </source>
</evidence>
<evidence type="ECO:0000269" key="7">
    <source>
    </source>
</evidence>
<evidence type="ECO:0000269" key="8">
    <source>
    </source>
</evidence>
<evidence type="ECO:0000269" key="9">
    <source>
    </source>
</evidence>
<evidence type="ECO:0000269" key="10">
    <source>
    </source>
</evidence>
<evidence type="ECO:0000269" key="11">
    <source>
    </source>
</evidence>
<evidence type="ECO:0000305" key="12"/>
<name>DYR1A_RAT</name>
<organism>
    <name type="scientific">Rattus norvegicus</name>
    <name type="common">Rat</name>
    <dbReference type="NCBI Taxonomy" id="10116"/>
    <lineage>
        <taxon>Eukaryota</taxon>
        <taxon>Metazoa</taxon>
        <taxon>Chordata</taxon>
        <taxon>Craniata</taxon>
        <taxon>Vertebrata</taxon>
        <taxon>Euteleostomi</taxon>
        <taxon>Mammalia</taxon>
        <taxon>Eutheria</taxon>
        <taxon>Euarchontoglires</taxon>
        <taxon>Glires</taxon>
        <taxon>Rodentia</taxon>
        <taxon>Myomorpha</taxon>
        <taxon>Muroidea</taxon>
        <taxon>Muridae</taxon>
        <taxon>Murinae</taxon>
        <taxon>Rattus</taxon>
    </lineage>
</organism>